<keyword id="KW-0030">Aminoacyl-tRNA synthetase</keyword>
<keyword id="KW-0067">ATP-binding</keyword>
<keyword id="KW-0963">Cytoplasm</keyword>
<keyword id="KW-0436">Ligase</keyword>
<keyword id="KW-0547">Nucleotide-binding</keyword>
<keyword id="KW-0648">Protein biosynthesis</keyword>
<accession>Q1BHL9</accession>
<reference key="1">
    <citation type="submission" date="2006-05" db="EMBL/GenBank/DDBJ databases">
        <title>Complete sequence of chromosome 3 of Burkholderia cenocepacia AU 1054.</title>
        <authorList>
            <consortium name="US DOE Joint Genome Institute"/>
            <person name="Copeland A."/>
            <person name="Lucas S."/>
            <person name="Lapidus A."/>
            <person name="Barry K."/>
            <person name="Detter J.C."/>
            <person name="Glavina del Rio T."/>
            <person name="Hammon N."/>
            <person name="Israni S."/>
            <person name="Dalin E."/>
            <person name="Tice H."/>
            <person name="Pitluck S."/>
            <person name="Chain P."/>
            <person name="Malfatti S."/>
            <person name="Shin M."/>
            <person name="Vergez L."/>
            <person name="Schmutz J."/>
            <person name="Larimer F."/>
            <person name="Land M."/>
            <person name="Hauser L."/>
            <person name="Kyrpides N."/>
            <person name="Lykidis A."/>
            <person name="LiPuma J.J."/>
            <person name="Konstantinidis K."/>
            <person name="Tiedje J.M."/>
            <person name="Richardson P."/>
        </authorList>
    </citation>
    <scope>NUCLEOTIDE SEQUENCE [LARGE SCALE GENOMIC DNA]</scope>
    <source>
        <strain>AU 1054</strain>
    </source>
</reference>
<name>SYE_BURO1</name>
<organism>
    <name type="scientific">Burkholderia orbicola (strain AU 1054)</name>
    <dbReference type="NCBI Taxonomy" id="331271"/>
    <lineage>
        <taxon>Bacteria</taxon>
        <taxon>Pseudomonadati</taxon>
        <taxon>Pseudomonadota</taxon>
        <taxon>Betaproteobacteria</taxon>
        <taxon>Burkholderiales</taxon>
        <taxon>Burkholderiaceae</taxon>
        <taxon>Burkholderia</taxon>
        <taxon>Burkholderia cepacia complex</taxon>
        <taxon>Burkholderia orbicola</taxon>
    </lineage>
</organism>
<feature type="chain" id="PRO_1000001878" description="Glutamate--tRNA ligase">
    <location>
        <begin position="1"/>
        <end position="469"/>
    </location>
</feature>
<feature type="short sequence motif" description="'HIGH' region" evidence="1">
    <location>
        <begin position="11"/>
        <end position="21"/>
    </location>
</feature>
<feature type="short sequence motif" description="'KMSKS' region" evidence="1">
    <location>
        <begin position="243"/>
        <end position="247"/>
    </location>
</feature>
<feature type="binding site" evidence="1">
    <location>
        <position position="246"/>
    </location>
    <ligand>
        <name>ATP</name>
        <dbReference type="ChEBI" id="CHEBI:30616"/>
    </ligand>
</feature>
<sequence>MTRPVRTRFAPSPTGFIHLGNIRSALYPWAFARKMKGTFVLRIEDTDVERSSQEAVDAILEGMQWLGLDFDEGPIYQMQRMDRYREVLAQMLEKGLAYPCYMSAEELDALRERQREAGLKPRYDGTWRPEPGKVLPEPPAGVKPVLRFRNPLTGTVVWDDAVKGRVEISNEELDDLVIARPDGTPIYNFCVVVDDMDMGITHVIRGDDHVNNTPRQINILNALGGEPPVYAHLPTVLNEQGEKMSKRHGAMSVMAYRDAGFLPEAVVNYLARLGWSHGDAEIFSREQFVEWFDLEHLGKSPAQYDHSKLSWLNAHYIKEADNARLAELAKPFLDALGIDDAAIATGPALDAVVGLMKDRATTVKEIAEGAAMFYRVPAPDADALAQHVTDAVRPALADLAAALKAADWTKEAVSAALKATLATHKLKMPQLAMSVRLLVAGTTHTPSIDAVLVLFGRDVVVTRIEAALA</sequence>
<proteinExistence type="inferred from homology"/>
<evidence type="ECO:0000255" key="1">
    <source>
        <dbReference type="HAMAP-Rule" id="MF_00022"/>
    </source>
</evidence>
<dbReference type="EC" id="6.1.1.17" evidence="1"/>
<dbReference type="EMBL" id="CP000380">
    <property type="protein sequence ID" value="ABF80886.1"/>
    <property type="molecule type" value="Genomic_DNA"/>
</dbReference>
<dbReference type="SMR" id="Q1BHL9"/>
<dbReference type="HOGENOM" id="CLU_015768_6_0_4"/>
<dbReference type="GO" id="GO:0005829">
    <property type="term" value="C:cytosol"/>
    <property type="evidence" value="ECO:0007669"/>
    <property type="project" value="TreeGrafter"/>
</dbReference>
<dbReference type="GO" id="GO:0005524">
    <property type="term" value="F:ATP binding"/>
    <property type="evidence" value="ECO:0007669"/>
    <property type="project" value="UniProtKB-UniRule"/>
</dbReference>
<dbReference type="GO" id="GO:0004818">
    <property type="term" value="F:glutamate-tRNA ligase activity"/>
    <property type="evidence" value="ECO:0007669"/>
    <property type="project" value="UniProtKB-UniRule"/>
</dbReference>
<dbReference type="GO" id="GO:0000049">
    <property type="term" value="F:tRNA binding"/>
    <property type="evidence" value="ECO:0007669"/>
    <property type="project" value="InterPro"/>
</dbReference>
<dbReference type="GO" id="GO:0008270">
    <property type="term" value="F:zinc ion binding"/>
    <property type="evidence" value="ECO:0007669"/>
    <property type="project" value="InterPro"/>
</dbReference>
<dbReference type="GO" id="GO:0006424">
    <property type="term" value="P:glutamyl-tRNA aminoacylation"/>
    <property type="evidence" value="ECO:0007669"/>
    <property type="project" value="UniProtKB-UniRule"/>
</dbReference>
<dbReference type="CDD" id="cd00808">
    <property type="entry name" value="GluRS_core"/>
    <property type="match status" value="1"/>
</dbReference>
<dbReference type="FunFam" id="3.40.50.620:FF:000007">
    <property type="entry name" value="Glutamate--tRNA ligase"/>
    <property type="match status" value="1"/>
</dbReference>
<dbReference type="Gene3D" id="1.10.10.350">
    <property type="match status" value="1"/>
</dbReference>
<dbReference type="Gene3D" id="1.10.8.70">
    <property type="entry name" value="Glutamate-tRNA synthetase, class I, anticodon-binding domain 1"/>
    <property type="match status" value="1"/>
</dbReference>
<dbReference type="Gene3D" id="3.40.50.620">
    <property type="entry name" value="HUPs"/>
    <property type="match status" value="1"/>
</dbReference>
<dbReference type="HAMAP" id="MF_00022">
    <property type="entry name" value="Glu_tRNA_synth_type1"/>
    <property type="match status" value="1"/>
</dbReference>
<dbReference type="InterPro" id="IPR045462">
    <property type="entry name" value="aa-tRNA-synth_I_cd-bd"/>
</dbReference>
<dbReference type="InterPro" id="IPR020751">
    <property type="entry name" value="aa-tRNA-synth_I_codon-bd_sub2"/>
</dbReference>
<dbReference type="InterPro" id="IPR001412">
    <property type="entry name" value="aa-tRNA-synth_I_CS"/>
</dbReference>
<dbReference type="InterPro" id="IPR008925">
    <property type="entry name" value="aa_tRNA-synth_I_cd-bd_sf"/>
</dbReference>
<dbReference type="InterPro" id="IPR004527">
    <property type="entry name" value="Glu-tRNA-ligase_bac/mito"/>
</dbReference>
<dbReference type="InterPro" id="IPR020752">
    <property type="entry name" value="Glu-tRNA-synth_I_codon-bd_sub1"/>
</dbReference>
<dbReference type="InterPro" id="IPR000924">
    <property type="entry name" value="Glu/Gln-tRNA-synth"/>
</dbReference>
<dbReference type="InterPro" id="IPR020058">
    <property type="entry name" value="Glu/Gln-tRNA-synth_Ib_cat-dom"/>
</dbReference>
<dbReference type="InterPro" id="IPR049940">
    <property type="entry name" value="GluQ/Sye"/>
</dbReference>
<dbReference type="InterPro" id="IPR033910">
    <property type="entry name" value="GluRS_core"/>
</dbReference>
<dbReference type="InterPro" id="IPR014729">
    <property type="entry name" value="Rossmann-like_a/b/a_fold"/>
</dbReference>
<dbReference type="NCBIfam" id="TIGR00464">
    <property type="entry name" value="gltX_bact"/>
    <property type="match status" value="1"/>
</dbReference>
<dbReference type="PANTHER" id="PTHR43311">
    <property type="entry name" value="GLUTAMATE--TRNA LIGASE"/>
    <property type="match status" value="1"/>
</dbReference>
<dbReference type="PANTHER" id="PTHR43311:SF2">
    <property type="entry name" value="GLUTAMATE--TRNA LIGASE, MITOCHONDRIAL-RELATED"/>
    <property type="match status" value="1"/>
</dbReference>
<dbReference type="Pfam" id="PF19269">
    <property type="entry name" value="Anticodon_2"/>
    <property type="match status" value="1"/>
</dbReference>
<dbReference type="Pfam" id="PF00749">
    <property type="entry name" value="tRNA-synt_1c"/>
    <property type="match status" value="1"/>
</dbReference>
<dbReference type="PRINTS" id="PR00987">
    <property type="entry name" value="TRNASYNTHGLU"/>
</dbReference>
<dbReference type="SUPFAM" id="SSF48163">
    <property type="entry name" value="An anticodon-binding domain of class I aminoacyl-tRNA synthetases"/>
    <property type="match status" value="1"/>
</dbReference>
<dbReference type="SUPFAM" id="SSF52374">
    <property type="entry name" value="Nucleotidylyl transferase"/>
    <property type="match status" value="1"/>
</dbReference>
<dbReference type="PROSITE" id="PS00178">
    <property type="entry name" value="AA_TRNA_LIGASE_I"/>
    <property type="match status" value="1"/>
</dbReference>
<gene>
    <name evidence="1" type="primary">gltX</name>
    <name type="ordered locus">Bcen_6021</name>
</gene>
<protein>
    <recommendedName>
        <fullName evidence="1">Glutamate--tRNA ligase</fullName>
        <ecNumber evidence="1">6.1.1.17</ecNumber>
    </recommendedName>
    <alternativeName>
        <fullName evidence="1">Glutamyl-tRNA synthetase</fullName>
        <shortName evidence="1">GluRS</shortName>
    </alternativeName>
</protein>
<comment type="function">
    <text evidence="1">Catalyzes the attachment of glutamate to tRNA(Glu) in a two-step reaction: glutamate is first activated by ATP to form Glu-AMP and then transferred to the acceptor end of tRNA(Glu).</text>
</comment>
<comment type="catalytic activity">
    <reaction evidence="1">
        <text>tRNA(Glu) + L-glutamate + ATP = L-glutamyl-tRNA(Glu) + AMP + diphosphate</text>
        <dbReference type="Rhea" id="RHEA:23540"/>
        <dbReference type="Rhea" id="RHEA-COMP:9663"/>
        <dbReference type="Rhea" id="RHEA-COMP:9680"/>
        <dbReference type="ChEBI" id="CHEBI:29985"/>
        <dbReference type="ChEBI" id="CHEBI:30616"/>
        <dbReference type="ChEBI" id="CHEBI:33019"/>
        <dbReference type="ChEBI" id="CHEBI:78442"/>
        <dbReference type="ChEBI" id="CHEBI:78520"/>
        <dbReference type="ChEBI" id="CHEBI:456215"/>
        <dbReference type="EC" id="6.1.1.17"/>
    </reaction>
</comment>
<comment type="subunit">
    <text evidence="1">Monomer.</text>
</comment>
<comment type="subcellular location">
    <subcellularLocation>
        <location evidence="1">Cytoplasm</location>
    </subcellularLocation>
</comment>
<comment type="similarity">
    <text evidence="1">Belongs to the class-I aminoacyl-tRNA synthetase family. Glutamate--tRNA ligase type 1 subfamily.</text>
</comment>